<protein>
    <recommendedName>
        <fullName evidence="3">4-nitrobenzoate reductase</fullName>
        <shortName evidence="3">4NBen reductase</shortName>
        <ecNumber evidence="2">1.7.1.-</ecNumber>
    </recommendedName>
</protein>
<organism>
    <name type="scientific">Pseudomonas putida</name>
    <name type="common">Arthrobacter siderocapsulatus</name>
    <dbReference type="NCBI Taxonomy" id="303"/>
    <lineage>
        <taxon>Bacteria</taxon>
        <taxon>Pseudomonadati</taxon>
        <taxon>Pseudomonadota</taxon>
        <taxon>Gammaproteobacteria</taxon>
        <taxon>Pseudomonadales</taxon>
        <taxon>Pseudomonadaceae</taxon>
        <taxon>Pseudomonas</taxon>
    </lineage>
</organism>
<comment type="function">
    <text evidence="2">Nitroreductase involved in the degradation of nitroaromatic compounds (PubMed:11157934). Catalyzes the conversion of 4-nitrobenzoate to 4-hydroxylaminobenzoate (PubMed:11157934). Required for the catabolism of 4-nitrotoluene (PubMed:11157934).</text>
</comment>
<comment type="catalytic activity">
    <reaction evidence="2">
        <text>4-nitrobenzoate + 2 NADH + 2 H(+) = 4-hydroxylaminobenzoate + 2 NAD(+) + H2O</text>
        <dbReference type="Rhea" id="RHEA:80199"/>
        <dbReference type="ChEBI" id="CHEBI:15377"/>
        <dbReference type="ChEBI" id="CHEBI:15378"/>
        <dbReference type="ChEBI" id="CHEBI:57540"/>
        <dbReference type="ChEBI" id="CHEBI:57945"/>
        <dbReference type="ChEBI" id="CHEBI:142863"/>
        <dbReference type="ChEBI" id="CHEBI:231457"/>
    </reaction>
    <physiologicalReaction direction="left-to-right" evidence="2">
        <dbReference type="Rhea" id="RHEA:80200"/>
    </physiologicalReaction>
</comment>
<comment type="cofactor">
    <cofactor evidence="1">
        <name>FMN</name>
        <dbReference type="ChEBI" id="CHEBI:58210"/>
    </cofactor>
    <text evidence="1">Binds 1 FMN per subunit.</text>
</comment>
<comment type="similarity">
    <text evidence="4">Belongs to the nitroreductase family.</text>
</comment>
<name>PNBA_PSEPU</name>
<reference key="1">
    <citation type="journal article" date="2001" name="J. Bacteriol.">
        <title>Cloning and characterisation of the pnb genes, encoding enzymes for 4-nitrobenzoate catabolism in Pseudomonas putida TW3.</title>
        <authorList>
            <person name="Hughes M.A."/>
            <person name="Williams P.A."/>
        </authorList>
    </citation>
    <scope>NUCLEOTIDE SEQUENCE [GENOMIC DNA]</scope>
    <scope>FUNCTION</scope>
    <scope>CATALYTIC ACTIVITY</scope>
    <source>
        <strain>TW3</strain>
    </source>
</reference>
<dbReference type="EC" id="1.7.1.-" evidence="2"/>
<dbReference type="EMBL" id="AF292094">
    <property type="protein sequence ID" value="AAG01540.1"/>
    <property type="molecule type" value="Genomic_DNA"/>
</dbReference>
<dbReference type="BioCyc" id="MetaCyc:MONOMER-2123"/>
<dbReference type="GO" id="GO:0016491">
    <property type="term" value="F:oxidoreductase activity"/>
    <property type="evidence" value="ECO:0007669"/>
    <property type="project" value="UniProtKB-KW"/>
</dbReference>
<dbReference type="CDD" id="cd02136">
    <property type="entry name" value="PnbA_NfnB-like"/>
    <property type="match status" value="1"/>
</dbReference>
<dbReference type="Gene3D" id="3.40.109.10">
    <property type="entry name" value="NADH Oxidase"/>
    <property type="match status" value="1"/>
</dbReference>
<dbReference type="InterPro" id="IPR029479">
    <property type="entry name" value="Nitroreductase"/>
</dbReference>
<dbReference type="InterPro" id="IPR000415">
    <property type="entry name" value="Nitroreductase-like"/>
</dbReference>
<dbReference type="PANTHER" id="PTHR43673">
    <property type="entry name" value="NAD(P)H NITROREDUCTASE YDGI-RELATED"/>
    <property type="match status" value="1"/>
</dbReference>
<dbReference type="PANTHER" id="PTHR43673:SF2">
    <property type="entry name" value="NITROREDUCTASE"/>
    <property type="match status" value="1"/>
</dbReference>
<dbReference type="Pfam" id="PF00881">
    <property type="entry name" value="Nitroreductase"/>
    <property type="match status" value="1"/>
</dbReference>
<dbReference type="SUPFAM" id="SSF55469">
    <property type="entry name" value="FMN-dependent nitroreductase-like"/>
    <property type="match status" value="1"/>
</dbReference>
<feature type="chain" id="PRO_0000461679" description="4-nitrobenzoate reductase">
    <location>
        <begin position="1"/>
        <end position="227"/>
    </location>
</feature>
<feature type="binding site" evidence="1">
    <location>
        <begin position="15"/>
        <end position="19"/>
    </location>
    <ligand>
        <name>FMN</name>
        <dbReference type="ChEBI" id="CHEBI:58210"/>
    </ligand>
</feature>
<feature type="binding site" evidence="1">
    <location>
        <position position="45"/>
    </location>
    <ligand>
        <name>NAD(+)</name>
        <dbReference type="ChEBI" id="CHEBI:57540"/>
    </ligand>
</feature>
<feature type="binding site" evidence="1">
    <location>
        <position position="102"/>
    </location>
    <ligand>
        <name>NAD(+)</name>
        <dbReference type="ChEBI" id="CHEBI:57540"/>
    </ligand>
</feature>
<feature type="binding site" evidence="1">
    <location>
        <position position="107"/>
    </location>
    <ligand>
        <name>NAD(+)</name>
        <dbReference type="ChEBI" id="CHEBI:57540"/>
    </ligand>
</feature>
<feature type="binding site" evidence="1">
    <location>
        <position position="213"/>
    </location>
    <ligand>
        <name>FMN</name>
        <dbReference type="ChEBI" id="CHEBI:58210"/>
    </ligand>
</feature>
<accession>Q9FD36</accession>
<sequence>MALLTDDFDAVVASRRAVRAFLPTPISRKLISEIIDIARLAPSNSNTQPWSIHVLTGEPKQALSALLGIAHNDPSADPLAHLPDDLARKYRERQEKWGELFYGLHQIDKCDDAGRARVSGLNFDFFGAPVGLIFTIDSNLKKYSWLDYGLFLQTLMLTARSRGLSTCPQVSFARFQSLIKDFLHLDDSQEIVCGMSLGYADENATVNSLRMPREMAQGFTHFMGFDR</sequence>
<keyword id="KW-0285">Flavoprotein</keyword>
<keyword id="KW-0288">FMN</keyword>
<keyword id="KW-0520">NAD</keyword>
<keyword id="KW-0560">Oxidoreductase</keyword>
<proteinExistence type="evidence at protein level"/>
<gene>
    <name evidence="3" type="primary">pnbA</name>
</gene>
<evidence type="ECO:0000250" key="1">
    <source>
        <dbReference type="UniProtKB" id="A0R6D0"/>
    </source>
</evidence>
<evidence type="ECO:0000269" key="2">
    <source>
    </source>
</evidence>
<evidence type="ECO:0000303" key="3">
    <source>
    </source>
</evidence>
<evidence type="ECO:0000305" key="4"/>